<keyword id="KW-0963">Cytoplasm</keyword>
<keyword id="KW-0489">Methyltransferase</keyword>
<keyword id="KW-0949">S-adenosyl-L-methionine</keyword>
<keyword id="KW-0808">Transferase</keyword>
<proteinExistence type="inferred from homology"/>
<sequence>MPWIQLQIPADPDTADQLEDLLMEMGADAVSMEDAADQPLYEPDPGTTPLWSQTTVTGLFQSDRNIEQLLADIRDAWHQQTQQSLADIDVTLVEDKDWERAWMDDFHPLQFGERLWIVPSWHEAPDPDAANLLLDPGLAFGTGTHPTTALCLEWLDGQDVAGKQVTDYGCGSGILGLAALLLGADHVVGVDTDPQALEASRDNARRNGVEDSRLDLYLPGQDPDTRADIMLANILAQPLIGLAPRLAELTRPGGHLVLSGILFNQAREVMDAYEPWFVMDEPEQKEDWIRLTGRRKDG</sequence>
<comment type="function">
    <text evidence="1">Methylates ribosomal protein L11.</text>
</comment>
<comment type="catalytic activity">
    <reaction evidence="1">
        <text>L-lysyl-[protein] + 3 S-adenosyl-L-methionine = N(6),N(6),N(6)-trimethyl-L-lysyl-[protein] + 3 S-adenosyl-L-homocysteine + 3 H(+)</text>
        <dbReference type="Rhea" id="RHEA:54192"/>
        <dbReference type="Rhea" id="RHEA-COMP:9752"/>
        <dbReference type="Rhea" id="RHEA-COMP:13826"/>
        <dbReference type="ChEBI" id="CHEBI:15378"/>
        <dbReference type="ChEBI" id="CHEBI:29969"/>
        <dbReference type="ChEBI" id="CHEBI:57856"/>
        <dbReference type="ChEBI" id="CHEBI:59789"/>
        <dbReference type="ChEBI" id="CHEBI:61961"/>
    </reaction>
</comment>
<comment type="subcellular location">
    <subcellularLocation>
        <location evidence="1">Cytoplasm</location>
    </subcellularLocation>
</comment>
<comment type="similarity">
    <text evidence="1">Belongs to the methyltransferase superfamily. PrmA family.</text>
</comment>
<evidence type="ECO:0000255" key="1">
    <source>
        <dbReference type="HAMAP-Rule" id="MF_00735"/>
    </source>
</evidence>
<protein>
    <recommendedName>
        <fullName evidence="1">Ribosomal protein L11 methyltransferase</fullName>
        <shortName evidence="1">L11 Mtase</shortName>
        <ecNumber evidence="1">2.1.1.-</ecNumber>
    </recommendedName>
</protein>
<gene>
    <name evidence="1" type="primary">prmA</name>
    <name type="ordered locus">Maqu_3446</name>
</gene>
<accession>A1U698</accession>
<feature type="chain" id="PRO_1000046045" description="Ribosomal protein L11 methyltransferase">
    <location>
        <begin position="1"/>
        <end position="298"/>
    </location>
</feature>
<feature type="binding site" evidence="1">
    <location>
        <position position="148"/>
    </location>
    <ligand>
        <name>S-adenosyl-L-methionine</name>
        <dbReference type="ChEBI" id="CHEBI:59789"/>
    </ligand>
</feature>
<feature type="binding site" evidence="1">
    <location>
        <position position="169"/>
    </location>
    <ligand>
        <name>S-adenosyl-L-methionine</name>
        <dbReference type="ChEBI" id="CHEBI:59789"/>
    </ligand>
</feature>
<feature type="binding site" evidence="1">
    <location>
        <position position="191"/>
    </location>
    <ligand>
        <name>S-adenosyl-L-methionine</name>
        <dbReference type="ChEBI" id="CHEBI:59789"/>
    </ligand>
</feature>
<feature type="binding site" evidence="1">
    <location>
        <position position="233"/>
    </location>
    <ligand>
        <name>S-adenosyl-L-methionine</name>
        <dbReference type="ChEBI" id="CHEBI:59789"/>
    </ligand>
</feature>
<dbReference type="EC" id="2.1.1.-" evidence="1"/>
<dbReference type="EMBL" id="CP000514">
    <property type="protein sequence ID" value="ABM20517.1"/>
    <property type="molecule type" value="Genomic_DNA"/>
</dbReference>
<dbReference type="RefSeq" id="WP_011786858.1">
    <property type="nucleotide sequence ID" value="NC_008740.1"/>
</dbReference>
<dbReference type="SMR" id="A1U698"/>
<dbReference type="STRING" id="351348.Maqu_3446"/>
<dbReference type="KEGG" id="maq:Maqu_3446"/>
<dbReference type="eggNOG" id="COG2264">
    <property type="taxonomic scope" value="Bacteria"/>
</dbReference>
<dbReference type="HOGENOM" id="CLU_049382_4_1_6"/>
<dbReference type="OrthoDB" id="9785995at2"/>
<dbReference type="Proteomes" id="UP000000998">
    <property type="component" value="Chromosome"/>
</dbReference>
<dbReference type="GO" id="GO:0005829">
    <property type="term" value="C:cytosol"/>
    <property type="evidence" value="ECO:0007669"/>
    <property type="project" value="TreeGrafter"/>
</dbReference>
<dbReference type="GO" id="GO:0016279">
    <property type="term" value="F:protein-lysine N-methyltransferase activity"/>
    <property type="evidence" value="ECO:0007669"/>
    <property type="project" value="TreeGrafter"/>
</dbReference>
<dbReference type="GO" id="GO:0032259">
    <property type="term" value="P:methylation"/>
    <property type="evidence" value="ECO:0007669"/>
    <property type="project" value="UniProtKB-KW"/>
</dbReference>
<dbReference type="CDD" id="cd02440">
    <property type="entry name" value="AdoMet_MTases"/>
    <property type="match status" value="1"/>
</dbReference>
<dbReference type="Gene3D" id="3.40.50.150">
    <property type="entry name" value="Vaccinia Virus protein VP39"/>
    <property type="match status" value="1"/>
</dbReference>
<dbReference type="HAMAP" id="MF_00735">
    <property type="entry name" value="Methyltr_PrmA"/>
    <property type="match status" value="1"/>
</dbReference>
<dbReference type="InterPro" id="IPR050078">
    <property type="entry name" value="Ribosomal_L11_MeTrfase_PrmA"/>
</dbReference>
<dbReference type="InterPro" id="IPR004498">
    <property type="entry name" value="Ribosomal_PrmA_MeTrfase"/>
</dbReference>
<dbReference type="InterPro" id="IPR029063">
    <property type="entry name" value="SAM-dependent_MTases_sf"/>
</dbReference>
<dbReference type="NCBIfam" id="TIGR00406">
    <property type="entry name" value="prmA"/>
    <property type="match status" value="1"/>
</dbReference>
<dbReference type="PANTHER" id="PTHR43648">
    <property type="entry name" value="ELECTRON TRANSFER FLAVOPROTEIN BETA SUBUNIT LYSINE METHYLTRANSFERASE"/>
    <property type="match status" value="1"/>
</dbReference>
<dbReference type="PANTHER" id="PTHR43648:SF1">
    <property type="entry name" value="ELECTRON TRANSFER FLAVOPROTEIN BETA SUBUNIT LYSINE METHYLTRANSFERASE"/>
    <property type="match status" value="1"/>
</dbReference>
<dbReference type="Pfam" id="PF06325">
    <property type="entry name" value="PrmA"/>
    <property type="match status" value="1"/>
</dbReference>
<dbReference type="PIRSF" id="PIRSF000401">
    <property type="entry name" value="RPL11_MTase"/>
    <property type="match status" value="1"/>
</dbReference>
<dbReference type="SUPFAM" id="SSF53335">
    <property type="entry name" value="S-adenosyl-L-methionine-dependent methyltransferases"/>
    <property type="match status" value="1"/>
</dbReference>
<reference key="1">
    <citation type="journal article" date="2011" name="Appl. Environ. Microbiol.">
        <title>Genomic potential of Marinobacter aquaeolei, a biogeochemical 'opportunitroph'.</title>
        <authorList>
            <person name="Singer E."/>
            <person name="Webb E.A."/>
            <person name="Nelson W.C."/>
            <person name="Heidelberg J.F."/>
            <person name="Ivanova N."/>
            <person name="Pati A."/>
            <person name="Edwards K.J."/>
        </authorList>
    </citation>
    <scope>NUCLEOTIDE SEQUENCE [LARGE SCALE GENOMIC DNA]</scope>
    <source>
        <strain>ATCC 700491 / DSM 11845 / VT8</strain>
    </source>
</reference>
<name>PRMA_MARN8</name>
<organism>
    <name type="scientific">Marinobacter nauticus (strain ATCC 700491 / DSM 11845 / VT8)</name>
    <name type="common">Marinobacter aquaeolei</name>
    <dbReference type="NCBI Taxonomy" id="351348"/>
    <lineage>
        <taxon>Bacteria</taxon>
        <taxon>Pseudomonadati</taxon>
        <taxon>Pseudomonadota</taxon>
        <taxon>Gammaproteobacteria</taxon>
        <taxon>Pseudomonadales</taxon>
        <taxon>Marinobacteraceae</taxon>
        <taxon>Marinobacter</taxon>
    </lineage>
</organism>